<proteinExistence type="inferred from homology"/>
<keyword id="KW-0067">ATP-binding</keyword>
<keyword id="KW-0131">Cell cycle</keyword>
<keyword id="KW-0132">Cell division</keyword>
<keyword id="KW-0133">Cell shape</keyword>
<keyword id="KW-0961">Cell wall biogenesis/degradation</keyword>
<keyword id="KW-0963">Cytoplasm</keyword>
<keyword id="KW-0436">Ligase</keyword>
<keyword id="KW-0547">Nucleotide-binding</keyword>
<keyword id="KW-0573">Peptidoglycan synthesis</keyword>
<keyword id="KW-1185">Reference proteome</keyword>
<organism>
    <name type="scientific">Paraburkholderia xenovorans (strain LB400)</name>
    <dbReference type="NCBI Taxonomy" id="266265"/>
    <lineage>
        <taxon>Bacteria</taxon>
        <taxon>Pseudomonadati</taxon>
        <taxon>Pseudomonadota</taxon>
        <taxon>Betaproteobacteria</taxon>
        <taxon>Burkholderiales</taxon>
        <taxon>Burkholderiaceae</taxon>
        <taxon>Paraburkholderia</taxon>
    </lineage>
</organism>
<sequence>MKHIVKHIHFVGIGGVGMSGIAEVLVNLGYQVSGSDLTSNAITDRLAALGARIAIGHAAENIEGANAVVVSTAVRSDNPEVLAARHRRIPIVPRAVMLAELMRLKQGIAIAGTHGKTTTTSLVASVLAAGGLDPTFVIGGRLISAGANARLGTGDFIVAEADESDASFLNLFPVIEVITNIDADHMDTYGHDFARLKQAFIEFTHRLPFYGIAVLCVDDPNVKEILPFVSKPIIRYGFAPDAQVRAVNVQARDGKMHFTAMREDAAPLDIVLNLPGEHNVQNALAAIAIATELEVKDADIQRALADFNGVGRRFQRYGEVPVFSEGSTNGAYTLVDDYGHHPVEMAATVAAARGAFPGRRLVLAFQPHRFTRTRDCFEDFVKVLSTVDALVLTEVYSAGESPIVAADGRALARALRVAGKVEPVFVDTVDEVPDALSAIVRDGDVVITMGAGSIGGVPARLAQETKV</sequence>
<dbReference type="EC" id="6.3.2.8" evidence="1"/>
<dbReference type="EMBL" id="CP000270">
    <property type="protein sequence ID" value="ABE32446.1"/>
    <property type="molecule type" value="Genomic_DNA"/>
</dbReference>
<dbReference type="RefSeq" id="WP_011489916.1">
    <property type="nucleotide sequence ID" value="NC_007951.1"/>
</dbReference>
<dbReference type="SMR" id="Q13TZ3"/>
<dbReference type="STRING" id="266265.Bxe_A0487"/>
<dbReference type="KEGG" id="bxb:DR64_2663"/>
<dbReference type="KEGG" id="bxe:Bxe_A0487"/>
<dbReference type="PATRIC" id="fig|266265.5.peg.4129"/>
<dbReference type="eggNOG" id="COG0773">
    <property type="taxonomic scope" value="Bacteria"/>
</dbReference>
<dbReference type="OrthoDB" id="9804126at2"/>
<dbReference type="UniPathway" id="UPA00219"/>
<dbReference type="Proteomes" id="UP000001817">
    <property type="component" value="Chromosome 1"/>
</dbReference>
<dbReference type="GO" id="GO:0005737">
    <property type="term" value="C:cytoplasm"/>
    <property type="evidence" value="ECO:0007669"/>
    <property type="project" value="UniProtKB-SubCell"/>
</dbReference>
<dbReference type="GO" id="GO:0005524">
    <property type="term" value="F:ATP binding"/>
    <property type="evidence" value="ECO:0007669"/>
    <property type="project" value="UniProtKB-UniRule"/>
</dbReference>
<dbReference type="GO" id="GO:0008763">
    <property type="term" value="F:UDP-N-acetylmuramate-L-alanine ligase activity"/>
    <property type="evidence" value="ECO:0007669"/>
    <property type="project" value="UniProtKB-UniRule"/>
</dbReference>
<dbReference type="GO" id="GO:0051301">
    <property type="term" value="P:cell division"/>
    <property type="evidence" value="ECO:0007669"/>
    <property type="project" value="UniProtKB-KW"/>
</dbReference>
<dbReference type="GO" id="GO:0071555">
    <property type="term" value="P:cell wall organization"/>
    <property type="evidence" value="ECO:0007669"/>
    <property type="project" value="UniProtKB-KW"/>
</dbReference>
<dbReference type="GO" id="GO:0009252">
    <property type="term" value="P:peptidoglycan biosynthetic process"/>
    <property type="evidence" value="ECO:0007669"/>
    <property type="project" value="UniProtKB-UniRule"/>
</dbReference>
<dbReference type="GO" id="GO:0008360">
    <property type="term" value="P:regulation of cell shape"/>
    <property type="evidence" value="ECO:0007669"/>
    <property type="project" value="UniProtKB-KW"/>
</dbReference>
<dbReference type="FunFam" id="3.40.1190.10:FF:000001">
    <property type="entry name" value="UDP-N-acetylmuramate--L-alanine ligase"/>
    <property type="match status" value="1"/>
</dbReference>
<dbReference type="Gene3D" id="3.90.190.20">
    <property type="entry name" value="Mur ligase, C-terminal domain"/>
    <property type="match status" value="1"/>
</dbReference>
<dbReference type="Gene3D" id="3.40.1190.10">
    <property type="entry name" value="Mur-like, catalytic domain"/>
    <property type="match status" value="1"/>
</dbReference>
<dbReference type="Gene3D" id="3.40.50.720">
    <property type="entry name" value="NAD(P)-binding Rossmann-like Domain"/>
    <property type="match status" value="1"/>
</dbReference>
<dbReference type="HAMAP" id="MF_00046">
    <property type="entry name" value="MurC"/>
    <property type="match status" value="1"/>
</dbReference>
<dbReference type="InterPro" id="IPR036565">
    <property type="entry name" value="Mur-like_cat_sf"/>
</dbReference>
<dbReference type="InterPro" id="IPR004101">
    <property type="entry name" value="Mur_ligase_C"/>
</dbReference>
<dbReference type="InterPro" id="IPR036615">
    <property type="entry name" value="Mur_ligase_C_dom_sf"/>
</dbReference>
<dbReference type="InterPro" id="IPR013221">
    <property type="entry name" value="Mur_ligase_cen"/>
</dbReference>
<dbReference type="InterPro" id="IPR000713">
    <property type="entry name" value="Mur_ligase_N"/>
</dbReference>
<dbReference type="InterPro" id="IPR050061">
    <property type="entry name" value="MurCDEF_pg_biosynth"/>
</dbReference>
<dbReference type="InterPro" id="IPR005758">
    <property type="entry name" value="UDP-N-AcMur_Ala_ligase_MurC"/>
</dbReference>
<dbReference type="NCBIfam" id="TIGR01082">
    <property type="entry name" value="murC"/>
    <property type="match status" value="1"/>
</dbReference>
<dbReference type="PANTHER" id="PTHR43445:SF3">
    <property type="entry name" value="UDP-N-ACETYLMURAMATE--L-ALANINE LIGASE"/>
    <property type="match status" value="1"/>
</dbReference>
<dbReference type="PANTHER" id="PTHR43445">
    <property type="entry name" value="UDP-N-ACETYLMURAMATE--L-ALANINE LIGASE-RELATED"/>
    <property type="match status" value="1"/>
</dbReference>
<dbReference type="Pfam" id="PF01225">
    <property type="entry name" value="Mur_ligase"/>
    <property type="match status" value="1"/>
</dbReference>
<dbReference type="Pfam" id="PF02875">
    <property type="entry name" value="Mur_ligase_C"/>
    <property type="match status" value="1"/>
</dbReference>
<dbReference type="Pfam" id="PF08245">
    <property type="entry name" value="Mur_ligase_M"/>
    <property type="match status" value="1"/>
</dbReference>
<dbReference type="SUPFAM" id="SSF51984">
    <property type="entry name" value="MurCD N-terminal domain"/>
    <property type="match status" value="1"/>
</dbReference>
<dbReference type="SUPFAM" id="SSF53623">
    <property type="entry name" value="MurD-like peptide ligases, catalytic domain"/>
    <property type="match status" value="1"/>
</dbReference>
<dbReference type="SUPFAM" id="SSF53244">
    <property type="entry name" value="MurD-like peptide ligases, peptide-binding domain"/>
    <property type="match status" value="1"/>
</dbReference>
<feature type="chain" id="PRO_1000004326" description="UDP-N-acetylmuramate--L-alanine ligase">
    <location>
        <begin position="1"/>
        <end position="467"/>
    </location>
</feature>
<feature type="binding site" evidence="1">
    <location>
        <begin position="112"/>
        <end position="118"/>
    </location>
    <ligand>
        <name>ATP</name>
        <dbReference type="ChEBI" id="CHEBI:30616"/>
    </ligand>
</feature>
<accession>Q13TZ3</accession>
<name>MURC_PARXL</name>
<evidence type="ECO:0000255" key="1">
    <source>
        <dbReference type="HAMAP-Rule" id="MF_00046"/>
    </source>
</evidence>
<protein>
    <recommendedName>
        <fullName evidence="1">UDP-N-acetylmuramate--L-alanine ligase</fullName>
        <ecNumber evidence="1">6.3.2.8</ecNumber>
    </recommendedName>
    <alternativeName>
        <fullName evidence="1">UDP-N-acetylmuramoyl-L-alanine synthetase</fullName>
    </alternativeName>
</protein>
<comment type="function">
    <text evidence="1">Cell wall formation.</text>
</comment>
<comment type="catalytic activity">
    <reaction evidence="1">
        <text>UDP-N-acetyl-alpha-D-muramate + L-alanine + ATP = UDP-N-acetyl-alpha-D-muramoyl-L-alanine + ADP + phosphate + H(+)</text>
        <dbReference type="Rhea" id="RHEA:23372"/>
        <dbReference type="ChEBI" id="CHEBI:15378"/>
        <dbReference type="ChEBI" id="CHEBI:30616"/>
        <dbReference type="ChEBI" id="CHEBI:43474"/>
        <dbReference type="ChEBI" id="CHEBI:57972"/>
        <dbReference type="ChEBI" id="CHEBI:70757"/>
        <dbReference type="ChEBI" id="CHEBI:83898"/>
        <dbReference type="ChEBI" id="CHEBI:456216"/>
        <dbReference type="EC" id="6.3.2.8"/>
    </reaction>
</comment>
<comment type="pathway">
    <text evidence="1">Cell wall biogenesis; peptidoglycan biosynthesis.</text>
</comment>
<comment type="subcellular location">
    <subcellularLocation>
        <location evidence="1">Cytoplasm</location>
    </subcellularLocation>
</comment>
<comment type="similarity">
    <text evidence="1">Belongs to the MurCDEF family.</text>
</comment>
<gene>
    <name evidence="1" type="primary">murC</name>
    <name type="ordered locus">Bxeno_A3908</name>
    <name type="ORF">Bxe_A0487</name>
</gene>
<reference key="1">
    <citation type="journal article" date="2006" name="Proc. Natl. Acad. Sci. U.S.A.">
        <title>Burkholderia xenovorans LB400 harbors a multi-replicon, 9.73-Mbp genome shaped for versatility.</title>
        <authorList>
            <person name="Chain P.S.G."/>
            <person name="Denef V.J."/>
            <person name="Konstantinidis K.T."/>
            <person name="Vergez L.M."/>
            <person name="Agullo L."/>
            <person name="Reyes V.L."/>
            <person name="Hauser L."/>
            <person name="Cordova M."/>
            <person name="Gomez L."/>
            <person name="Gonzalez M."/>
            <person name="Land M."/>
            <person name="Lao V."/>
            <person name="Larimer F."/>
            <person name="LiPuma J.J."/>
            <person name="Mahenthiralingam E."/>
            <person name="Malfatti S.A."/>
            <person name="Marx C.J."/>
            <person name="Parnell J.J."/>
            <person name="Ramette A."/>
            <person name="Richardson P."/>
            <person name="Seeger M."/>
            <person name="Smith D."/>
            <person name="Spilker T."/>
            <person name="Sul W.J."/>
            <person name="Tsoi T.V."/>
            <person name="Ulrich L.E."/>
            <person name="Zhulin I.B."/>
            <person name="Tiedje J.M."/>
        </authorList>
    </citation>
    <scope>NUCLEOTIDE SEQUENCE [LARGE SCALE GENOMIC DNA]</scope>
    <source>
        <strain>LB400</strain>
    </source>
</reference>